<gene>
    <name type="ordered locus">Os01g0794400</name>
    <name type="ordered locus">LOC_Os01g58194</name>
    <name type="ORF">OsJ_03740</name>
</gene>
<feature type="chain" id="PRO_0000394851" description="Probable nucleoredoxin 2">
    <location>
        <begin position="1"/>
        <end position="394"/>
    </location>
</feature>
<feature type="domain" description="Thioredoxin 1" evidence="1">
    <location>
        <begin position="15"/>
        <end position="176"/>
    </location>
</feature>
<feature type="domain" description="Thioredoxin 2" evidence="1">
    <location>
        <begin position="180"/>
        <end position="327"/>
    </location>
</feature>
<proteinExistence type="evidence at transcript level"/>
<keyword id="KW-0520">NAD</keyword>
<keyword id="KW-0560">Oxidoreductase</keyword>
<keyword id="KW-1185">Reference proteome</keyword>
<keyword id="KW-0677">Repeat</keyword>
<comment type="function">
    <text>Probable thiol-disulfide oxidoreductase that may participate in various redox reactions.</text>
</comment>
<comment type="catalytic activity">
    <reaction>
        <text>[protein]-dithiol + NAD(+) = [protein]-disulfide + NADH + H(+)</text>
        <dbReference type="Rhea" id="RHEA:18749"/>
        <dbReference type="Rhea" id="RHEA-COMP:10593"/>
        <dbReference type="Rhea" id="RHEA-COMP:10594"/>
        <dbReference type="ChEBI" id="CHEBI:15378"/>
        <dbReference type="ChEBI" id="CHEBI:29950"/>
        <dbReference type="ChEBI" id="CHEBI:50058"/>
        <dbReference type="ChEBI" id="CHEBI:57540"/>
        <dbReference type="ChEBI" id="CHEBI:57945"/>
        <dbReference type="EC" id="1.8.1.8"/>
    </reaction>
</comment>
<comment type="catalytic activity">
    <reaction>
        <text>[protein]-dithiol + NADP(+) = [protein]-disulfide + NADPH + H(+)</text>
        <dbReference type="Rhea" id="RHEA:18753"/>
        <dbReference type="Rhea" id="RHEA-COMP:10593"/>
        <dbReference type="Rhea" id="RHEA-COMP:10594"/>
        <dbReference type="ChEBI" id="CHEBI:15378"/>
        <dbReference type="ChEBI" id="CHEBI:29950"/>
        <dbReference type="ChEBI" id="CHEBI:50058"/>
        <dbReference type="ChEBI" id="CHEBI:57783"/>
        <dbReference type="ChEBI" id="CHEBI:58349"/>
        <dbReference type="EC" id="1.8.1.8"/>
    </reaction>
</comment>
<comment type="similarity">
    <text evidence="2">Belongs to the nucleoredoxin family.</text>
</comment>
<dbReference type="EC" id="1.8.1.8"/>
<dbReference type="EMBL" id="AP008207">
    <property type="protein sequence ID" value="BAF06417.1"/>
    <property type="molecule type" value="Genomic_DNA"/>
</dbReference>
<dbReference type="EMBL" id="AP014957">
    <property type="protein sequence ID" value="BAS74737.1"/>
    <property type="molecule type" value="Genomic_DNA"/>
</dbReference>
<dbReference type="EMBL" id="CM000138">
    <property type="protein sequence ID" value="EEE55518.1"/>
    <property type="molecule type" value="Genomic_DNA"/>
</dbReference>
<dbReference type="EMBL" id="AK122041">
    <property type="protein sequence ID" value="BAH00765.1"/>
    <property type="molecule type" value="mRNA"/>
</dbReference>
<dbReference type="RefSeq" id="XP_015621161.1">
    <property type="nucleotide sequence ID" value="XM_015765675.1"/>
</dbReference>
<dbReference type="SMR" id="Q0JIL1"/>
<dbReference type="FunCoup" id="Q0JIL1">
    <property type="interactions" value="90"/>
</dbReference>
<dbReference type="STRING" id="39947.Q0JIL1"/>
<dbReference type="PaxDb" id="39947-Q0JIL1"/>
<dbReference type="EnsemblPlants" id="Os01t0794400-01">
    <property type="protein sequence ID" value="Os01t0794400-01"/>
    <property type="gene ID" value="Os01g0794400"/>
</dbReference>
<dbReference type="Gramene" id="Os01t0794400-01">
    <property type="protein sequence ID" value="Os01t0794400-01"/>
    <property type="gene ID" value="Os01g0794400"/>
</dbReference>
<dbReference type="KEGG" id="dosa:Os01g0794400"/>
<dbReference type="eggNOG" id="KOG2501">
    <property type="taxonomic scope" value="Eukaryota"/>
</dbReference>
<dbReference type="HOGENOM" id="CLU_019626_0_2_1"/>
<dbReference type="InParanoid" id="Q0JIL1"/>
<dbReference type="OMA" id="AHRCAPC"/>
<dbReference type="OrthoDB" id="409136at2759"/>
<dbReference type="Proteomes" id="UP000000763">
    <property type="component" value="Chromosome 1"/>
</dbReference>
<dbReference type="Proteomes" id="UP000007752">
    <property type="component" value="Chromosome 1"/>
</dbReference>
<dbReference type="Proteomes" id="UP000059680">
    <property type="component" value="Chromosome 1"/>
</dbReference>
<dbReference type="GO" id="GO:0047134">
    <property type="term" value="F:protein-disulfide reductase [NAD(P)H] activity"/>
    <property type="evidence" value="ECO:0007669"/>
    <property type="project" value="UniProtKB-EC"/>
</dbReference>
<dbReference type="Gene3D" id="3.40.30.10">
    <property type="entry name" value="Glutaredoxin"/>
    <property type="match status" value="2"/>
</dbReference>
<dbReference type="InterPro" id="IPR046349">
    <property type="entry name" value="C1-like_sf"/>
</dbReference>
<dbReference type="InterPro" id="IPR004146">
    <property type="entry name" value="DC1"/>
</dbReference>
<dbReference type="InterPro" id="IPR052259">
    <property type="entry name" value="Nucleoredoxin-like"/>
</dbReference>
<dbReference type="InterPro" id="IPR012336">
    <property type="entry name" value="Thioredoxin-like_fold"/>
</dbReference>
<dbReference type="InterPro" id="IPR036249">
    <property type="entry name" value="Thioredoxin-like_sf"/>
</dbReference>
<dbReference type="InterPro" id="IPR013766">
    <property type="entry name" value="Thioredoxin_domain"/>
</dbReference>
<dbReference type="PANTHER" id="PTHR13871:SF7">
    <property type="entry name" value="NUCLEOREDOXIN 2-RELATED"/>
    <property type="match status" value="1"/>
</dbReference>
<dbReference type="PANTHER" id="PTHR13871">
    <property type="entry name" value="THIOREDOXIN"/>
    <property type="match status" value="1"/>
</dbReference>
<dbReference type="Pfam" id="PF03107">
    <property type="entry name" value="C1_2"/>
    <property type="match status" value="1"/>
</dbReference>
<dbReference type="Pfam" id="PF13905">
    <property type="entry name" value="Thioredoxin_8"/>
    <property type="match status" value="2"/>
</dbReference>
<dbReference type="SUPFAM" id="SSF57889">
    <property type="entry name" value="Cysteine-rich domain"/>
    <property type="match status" value="1"/>
</dbReference>
<dbReference type="SUPFAM" id="SSF52833">
    <property type="entry name" value="Thioredoxin-like"/>
    <property type="match status" value="2"/>
</dbReference>
<dbReference type="PROSITE" id="PS51352">
    <property type="entry name" value="THIOREDOXIN_2"/>
    <property type="match status" value="1"/>
</dbReference>
<name>NRX2_ORYSJ</name>
<accession>Q0JIL1</accession>
<accession>A0A0N7KDW3</accession>
<protein>
    <recommendedName>
        <fullName>Probable nucleoredoxin 2</fullName>
        <shortName>OsNrx2</shortName>
        <ecNumber>1.8.1.8</ecNumber>
    </recommendedName>
</protein>
<reference key="1">
    <citation type="journal article" date="2005" name="Nature">
        <title>The map-based sequence of the rice genome.</title>
        <authorList>
            <consortium name="International rice genome sequencing project (IRGSP)"/>
        </authorList>
    </citation>
    <scope>NUCLEOTIDE SEQUENCE [LARGE SCALE GENOMIC DNA]</scope>
    <source>
        <strain>cv. Nipponbare</strain>
    </source>
</reference>
<reference key="2">
    <citation type="journal article" date="2008" name="Nucleic Acids Res.">
        <title>The rice annotation project database (RAP-DB): 2008 update.</title>
        <authorList>
            <consortium name="The rice annotation project (RAP)"/>
        </authorList>
    </citation>
    <scope>GENOME REANNOTATION</scope>
    <source>
        <strain>cv. Nipponbare</strain>
    </source>
</reference>
<reference key="3">
    <citation type="journal article" date="2013" name="Rice">
        <title>Improvement of the Oryza sativa Nipponbare reference genome using next generation sequence and optical map data.</title>
        <authorList>
            <person name="Kawahara Y."/>
            <person name="de la Bastide M."/>
            <person name="Hamilton J.P."/>
            <person name="Kanamori H."/>
            <person name="McCombie W.R."/>
            <person name="Ouyang S."/>
            <person name="Schwartz D.C."/>
            <person name="Tanaka T."/>
            <person name="Wu J."/>
            <person name="Zhou S."/>
            <person name="Childs K.L."/>
            <person name="Davidson R.M."/>
            <person name="Lin H."/>
            <person name="Quesada-Ocampo L."/>
            <person name="Vaillancourt B."/>
            <person name="Sakai H."/>
            <person name="Lee S.S."/>
            <person name="Kim J."/>
            <person name="Numa H."/>
            <person name="Itoh T."/>
            <person name="Buell C.R."/>
            <person name="Matsumoto T."/>
        </authorList>
    </citation>
    <scope>GENOME REANNOTATION</scope>
    <source>
        <strain>cv. Nipponbare</strain>
    </source>
</reference>
<reference key="4">
    <citation type="journal article" date="2005" name="PLoS Biol.">
        <title>The genomes of Oryza sativa: a history of duplications.</title>
        <authorList>
            <person name="Yu J."/>
            <person name="Wang J."/>
            <person name="Lin W."/>
            <person name="Li S."/>
            <person name="Li H."/>
            <person name="Zhou J."/>
            <person name="Ni P."/>
            <person name="Dong W."/>
            <person name="Hu S."/>
            <person name="Zeng C."/>
            <person name="Zhang J."/>
            <person name="Zhang Y."/>
            <person name="Li R."/>
            <person name="Xu Z."/>
            <person name="Li S."/>
            <person name="Li X."/>
            <person name="Zheng H."/>
            <person name="Cong L."/>
            <person name="Lin L."/>
            <person name="Yin J."/>
            <person name="Geng J."/>
            <person name="Li G."/>
            <person name="Shi J."/>
            <person name="Liu J."/>
            <person name="Lv H."/>
            <person name="Li J."/>
            <person name="Wang J."/>
            <person name="Deng Y."/>
            <person name="Ran L."/>
            <person name="Shi X."/>
            <person name="Wang X."/>
            <person name="Wu Q."/>
            <person name="Li C."/>
            <person name="Ren X."/>
            <person name="Wang J."/>
            <person name="Wang X."/>
            <person name="Li D."/>
            <person name="Liu D."/>
            <person name="Zhang X."/>
            <person name="Ji Z."/>
            <person name="Zhao W."/>
            <person name="Sun Y."/>
            <person name="Zhang Z."/>
            <person name="Bao J."/>
            <person name="Han Y."/>
            <person name="Dong L."/>
            <person name="Ji J."/>
            <person name="Chen P."/>
            <person name="Wu S."/>
            <person name="Liu J."/>
            <person name="Xiao Y."/>
            <person name="Bu D."/>
            <person name="Tan J."/>
            <person name="Yang L."/>
            <person name="Ye C."/>
            <person name="Zhang J."/>
            <person name="Xu J."/>
            <person name="Zhou Y."/>
            <person name="Yu Y."/>
            <person name="Zhang B."/>
            <person name="Zhuang S."/>
            <person name="Wei H."/>
            <person name="Liu B."/>
            <person name="Lei M."/>
            <person name="Yu H."/>
            <person name="Li Y."/>
            <person name="Xu H."/>
            <person name="Wei S."/>
            <person name="He X."/>
            <person name="Fang L."/>
            <person name="Zhang Z."/>
            <person name="Zhang Y."/>
            <person name="Huang X."/>
            <person name="Su Z."/>
            <person name="Tong W."/>
            <person name="Li J."/>
            <person name="Tong Z."/>
            <person name="Li S."/>
            <person name="Ye J."/>
            <person name="Wang L."/>
            <person name="Fang L."/>
            <person name="Lei T."/>
            <person name="Chen C.-S."/>
            <person name="Chen H.-C."/>
            <person name="Xu Z."/>
            <person name="Li H."/>
            <person name="Huang H."/>
            <person name="Zhang F."/>
            <person name="Xu H."/>
            <person name="Li N."/>
            <person name="Zhao C."/>
            <person name="Li S."/>
            <person name="Dong L."/>
            <person name="Huang Y."/>
            <person name="Li L."/>
            <person name="Xi Y."/>
            <person name="Qi Q."/>
            <person name="Li W."/>
            <person name="Zhang B."/>
            <person name="Hu W."/>
            <person name="Zhang Y."/>
            <person name="Tian X."/>
            <person name="Jiao Y."/>
            <person name="Liang X."/>
            <person name="Jin J."/>
            <person name="Gao L."/>
            <person name="Zheng W."/>
            <person name="Hao B."/>
            <person name="Liu S.-M."/>
            <person name="Wang W."/>
            <person name="Yuan L."/>
            <person name="Cao M."/>
            <person name="McDermott J."/>
            <person name="Samudrala R."/>
            <person name="Wang J."/>
            <person name="Wong G.K.-S."/>
            <person name="Yang H."/>
        </authorList>
    </citation>
    <scope>NUCLEOTIDE SEQUENCE [LARGE SCALE GENOMIC DNA]</scope>
    <source>
        <strain>cv. Nipponbare</strain>
    </source>
</reference>
<reference key="5">
    <citation type="journal article" date="2003" name="Science">
        <title>Collection, mapping, and annotation of over 28,000 cDNA clones from japonica rice.</title>
        <authorList>
            <consortium name="The rice full-length cDNA consortium"/>
        </authorList>
    </citation>
    <scope>NUCLEOTIDE SEQUENCE [LARGE SCALE MRNA]</scope>
    <source>
        <strain>cv. Nipponbare</strain>
    </source>
</reference>
<reference key="6">
    <citation type="journal article" date="2009" name="Mol. Plant">
        <title>Comparative genomic study of the thioredoxin family in photosynthetic organisms with emphasis on Populus trichocarpa.</title>
        <authorList>
            <person name="Chibani K."/>
            <person name="Wingsle G."/>
            <person name="Jacquot J.P."/>
            <person name="Gelhaye E."/>
            <person name="Rouhier N."/>
        </authorList>
    </citation>
    <scope>GENE FAMILY</scope>
    <scope>NOMENCLATURE</scope>
</reference>
<evidence type="ECO:0000255" key="1">
    <source>
        <dbReference type="PROSITE-ProRule" id="PRU00691"/>
    </source>
</evidence>
<evidence type="ECO:0000305" key="2"/>
<sequence>MGREPEMEEARENGGVGGSVLPLASLISPTGNEVQISELEGKIIGLYFAANWYPKCEAFTPALTAAYHQLKEHGAGFEVIFVSCDENRPSFERFHRAMPWPAVPFGDIGCKKRLSERFQVEGIPRLVVLAPNGEVVQPDAVELVHRYGDRAFPFTSARVAELEADEQRKFASQTLEKIFSVSGKDYVNGSQEQVPISSLVGKTVGLYFSAHRCAPCIKFTAKLAAIYSNLKGKAEDFEIIYIPMDKEEDGYLRSCSDMPWLALPYDDGASSGALARYFDVREIPTLVVVGPDGKTVTREGRNLVNLYFDMAFPFTDEQIRLLQEMEDEDAKGYPPSLRHTGHRHELSIVSDKSGGGPYICCECDEQGLGWAYQCIACGYEIHLRCGRDMEGRAE</sequence>
<organism>
    <name type="scientific">Oryza sativa subsp. japonica</name>
    <name type="common">Rice</name>
    <dbReference type="NCBI Taxonomy" id="39947"/>
    <lineage>
        <taxon>Eukaryota</taxon>
        <taxon>Viridiplantae</taxon>
        <taxon>Streptophyta</taxon>
        <taxon>Embryophyta</taxon>
        <taxon>Tracheophyta</taxon>
        <taxon>Spermatophyta</taxon>
        <taxon>Magnoliopsida</taxon>
        <taxon>Liliopsida</taxon>
        <taxon>Poales</taxon>
        <taxon>Poaceae</taxon>
        <taxon>BOP clade</taxon>
        <taxon>Oryzoideae</taxon>
        <taxon>Oryzeae</taxon>
        <taxon>Oryzinae</taxon>
        <taxon>Oryza</taxon>
        <taxon>Oryza sativa</taxon>
    </lineage>
</organism>